<keyword id="KW-0143">Chaperone</keyword>
<keyword id="KW-0963">Cytoplasm</keyword>
<keyword id="KW-0342">GTP-binding</keyword>
<keyword id="KW-0996">Nickel insertion</keyword>
<keyword id="KW-0547">Nucleotide-binding</keyword>
<keyword id="KW-1185">Reference proteome</keyword>
<comment type="function">
    <text evidence="1">Facilitates the functional incorporation of the urease nickel metallocenter. This process requires GTP hydrolysis, probably effectuated by UreG.</text>
</comment>
<comment type="subunit">
    <text evidence="1">Homodimer. UreD, UreF and UreG form a complex that acts as a GTP-hydrolysis-dependent molecular chaperone, activating the urease apoprotein by helping to assemble the nickel containing metallocenter of UreC. The UreE protein probably delivers the nickel.</text>
</comment>
<comment type="subcellular location">
    <subcellularLocation>
        <location evidence="1">Cytoplasm</location>
    </subcellularLocation>
</comment>
<comment type="similarity">
    <text evidence="1">Belongs to the SIMIBI class G3E GTPase family. UreG subfamily.</text>
</comment>
<proteinExistence type="inferred from homology"/>
<organism>
    <name type="scientific">Tolumonas auensis (strain DSM 9187 / NBRC 110442 / TA 4)</name>
    <dbReference type="NCBI Taxonomy" id="595494"/>
    <lineage>
        <taxon>Bacteria</taxon>
        <taxon>Pseudomonadati</taxon>
        <taxon>Pseudomonadota</taxon>
        <taxon>Gammaproteobacteria</taxon>
        <taxon>Aeromonadales</taxon>
        <taxon>Aeromonadaceae</taxon>
        <taxon>Tolumonas</taxon>
    </lineage>
</organism>
<name>UREG_TOLAT</name>
<evidence type="ECO:0000255" key="1">
    <source>
        <dbReference type="HAMAP-Rule" id="MF_01389"/>
    </source>
</evidence>
<dbReference type="EMBL" id="CP001616">
    <property type="protein sequence ID" value="ACQ93226.1"/>
    <property type="molecule type" value="Genomic_DNA"/>
</dbReference>
<dbReference type="RefSeq" id="WP_015878697.1">
    <property type="nucleotide sequence ID" value="NC_012691.1"/>
</dbReference>
<dbReference type="SMR" id="C4LF59"/>
<dbReference type="STRING" id="595494.Tola_1615"/>
<dbReference type="KEGG" id="tau:Tola_1615"/>
<dbReference type="eggNOG" id="COG0378">
    <property type="taxonomic scope" value="Bacteria"/>
</dbReference>
<dbReference type="HOGENOM" id="CLU_072144_1_0_6"/>
<dbReference type="OrthoDB" id="9802035at2"/>
<dbReference type="Proteomes" id="UP000009073">
    <property type="component" value="Chromosome"/>
</dbReference>
<dbReference type="GO" id="GO:0005737">
    <property type="term" value="C:cytoplasm"/>
    <property type="evidence" value="ECO:0007669"/>
    <property type="project" value="UniProtKB-SubCell"/>
</dbReference>
<dbReference type="GO" id="GO:0005525">
    <property type="term" value="F:GTP binding"/>
    <property type="evidence" value="ECO:0007669"/>
    <property type="project" value="UniProtKB-KW"/>
</dbReference>
<dbReference type="GO" id="GO:0003924">
    <property type="term" value="F:GTPase activity"/>
    <property type="evidence" value="ECO:0007669"/>
    <property type="project" value="InterPro"/>
</dbReference>
<dbReference type="GO" id="GO:0016151">
    <property type="term" value="F:nickel cation binding"/>
    <property type="evidence" value="ECO:0007669"/>
    <property type="project" value="UniProtKB-UniRule"/>
</dbReference>
<dbReference type="GO" id="GO:0043419">
    <property type="term" value="P:urea catabolic process"/>
    <property type="evidence" value="ECO:0007669"/>
    <property type="project" value="InterPro"/>
</dbReference>
<dbReference type="CDD" id="cd05540">
    <property type="entry name" value="UreG"/>
    <property type="match status" value="1"/>
</dbReference>
<dbReference type="FunFam" id="3.40.50.300:FF:000208">
    <property type="entry name" value="Urease accessory protein UreG"/>
    <property type="match status" value="1"/>
</dbReference>
<dbReference type="Gene3D" id="3.40.50.300">
    <property type="entry name" value="P-loop containing nucleotide triphosphate hydrolases"/>
    <property type="match status" value="1"/>
</dbReference>
<dbReference type="HAMAP" id="MF_01389">
    <property type="entry name" value="UreG"/>
    <property type="match status" value="1"/>
</dbReference>
<dbReference type="InterPro" id="IPR003495">
    <property type="entry name" value="CobW/HypB/UreG_nucleotide-bd"/>
</dbReference>
<dbReference type="InterPro" id="IPR027417">
    <property type="entry name" value="P-loop_NTPase"/>
</dbReference>
<dbReference type="InterPro" id="IPR004400">
    <property type="entry name" value="UreG"/>
</dbReference>
<dbReference type="NCBIfam" id="TIGR00101">
    <property type="entry name" value="ureG"/>
    <property type="match status" value="1"/>
</dbReference>
<dbReference type="PANTHER" id="PTHR31715">
    <property type="entry name" value="UREASE ACCESSORY PROTEIN G"/>
    <property type="match status" value="1"/>
</dbReference>
<dbReference type="PANTHER" id="PTHR31715:SF0">
    <property type="entry name" value="UREASE ACCESSORY PROTEIN G"/>
    <property type="match status" value="1"/>
</dbReference>
<dbReference type="Pfam" id="PF02492">
    <property type="entry name" value="cobW"/>
    <property type="match status" value="1"/>
</dbReference>
<dbReference type="PIRSF" id="PIRSF005624">
    <property type="entry name" value="Ni-bind_GTPase"/>
    <property type="match status" value="1"/>
</dbReference>
<dbReference type="SUPFAM" id="SSF52540">
    <property type="entry name" value="P-loop containing nucleoside triphosphate hydrolases"/>
    <property type="match status" value="1"/>
</dbReference>
<feature type="chain" id="PRO_1000215141" description="Urease accessory protein UreG">
    <location>
        <begin position="1"/>
        <end position="207"/>
    </location>
</feature>
<feature type="binding site" evidence="1">
    <location>
        <begin position="14"/>
        <end position="21"/>
    </location>
    <ligand>
        <name>GTP</name>
        <dbReference type="ChEBI" id="CHEBI:37565"/>
    </ligand>
</feature>
<reference key="1">
    <citation type="submission" date="2009-05" db="EMBL/GenBank/DDBJ databases">
        <title>Complete sequence of Tolumonas auensis DSM 9187.</title>
        <authorList>
            <consortium name="US DOE Joint Genome Institute"/>
            <person name="Lucas S."/>
            <person name="Copeland A."/>
            <person name="Lapidus A."/>
            <person name="Glavina del Rio T."/>
            <person name="Tice H."/>
            <person name="Bruce D."/>
            <person name="Goodwin L."/>
            <person name="Pitluck S."/>
            <person name="Chertkov O."/>
            <person name="Brettin T."/>
            <person name="Detter J.C."/>
            <person name="Han C."/>
            <person name="Larimer F."/>
            <person name="Land M."/>
            <person name="Hauser L."/>
            <person name="Kyrpides N."/>
            <person name="Mikhailova N."/>
            <person name="Spring S."/>
            <person name="Beller H."/>
        </authorList>
    </citation>
    <scope>NUCLEOTIDE SEQUENCE [LARGE SCALE GENOMIC DNA]</scope>
    <source>
        <strain>DSM 9187 / NBRC 110442 / TA 4</strain>
    </source>
</reference>
<accession>C4LF59</accession>
<protein>
    <recommendedName>
        <fullName evidence="1">Urease accessory protein UreG</fullName>
    </recommendedName>
</protein>
<gene>
    <name evidence="1" type="primary">ureG</name>
    <name type="ordered locus">Tola_1615</name>
</gene>
<sequence>MTQTSSPLRVGVGGPVGSGKTALLEVLCKKMRNHFEIAVVTNDIYTKEDQRILTEAGALAAERIVGVETGGCPHTAIREDASMNLAAVEALSEKFGNLDVVFVESGGDNLSATFSPELADMTIYVIDVAEGEKIPRKGGPGITKSDLLVINKIDLAPYVGARLDVMESDTNRMRPEKPWTFANLKAGQGVDTIIDFIVTHGMLTPKA</sequence>